<reference key="1">
    <citation type="submission" date="1997-02" db="EMBL/GenBank/DDBJ databases">
        <authorList>
            <person name="Bergeson S.E."/>
            <person name="Barry R."/>
            <person name="Allen T."/>
            <person name="Hwang H."/>
            <person name="Ullman B."/>
        </authorList>
    </citation>
    <scope>NUCLEOTIDE SEQUENCE [GENOMIC DNA]</scope>
    <source>
        <strain>ATCC 25618 / H37Rv</strain>
    </source>
</reference>
<reference key="2">
    <citation type="journal article" date="1998" name="Nature">
        <title>Deciphering the biology of Mycobacterium tuberculosis from the complete genome sequence.</title>
        <authorList>
            <person name="Cole S.T."/>
            <person name="Brosch R."/>
            <person name="Parkhill J."/>
            <person name="Garnier T."/>
            <person name="Churcher C.M."/>
            <person name="Harris D.E."/>
            <person name="Gordon S.V."/>
            <person name="Eiglmeier K."/>
            <person name="Gas S."/>
            <person name="Barry C.E. III"/>
            <person name="Tekaia F."/>
            <person name="Badcock K."/>
            <person name="Basham D."/>
            <person name="Brown D."/>
            <person name="Chillingworth T."/>
            <person name="Connor R."/>
            <person name="Davies R.M."/>
            <person name="Devlin K."/>
            <person name="Feltwell T."/>
            <person name="Gentles S."/>
            <person name="Hamlin N."/>
            <person name="Holroyd S."/>
            <person name="Hornsby T."/>
            <person name="Jagels K."/>
            <person name="Krogh A."/>
            <person name="McLean J."/>
            <person name="Moule S."/>
            <person name="Murphy L.D."/>
            <person name="Oliver S."/>
            <person name="Osborne J."/>
            <person name="Quail M.A."/>
            <person name="Rajandream M.A."/>
            <person name="Rogers J."/>
            <person name="Rutter S."/>
            <person name="Seeger K."/>
            <person name="Skelton S."/>
            <person name="Squares S."/>
            <person name="Squares R."/>
            <person name="Sulston J.E."/>
            <person name="Taylor K."/>
            <person name="Whitehead S."/>
            <person name="Barrell B.G."/>
        </authorList>
    </citation>
    <scope>NUCLEOTIDE SEQUENCE [LARGE SCALE GENOMIC DNA]</scope>
    <source>
        <strain>ATCC 25618 / H37Rv</strain>
    </source>
</reference>
<reference key="3">
    <citation type="journal article" date="2011" name="Mol. Cell. Proteomics">
        <title>Proteogenomic analysis of Mycobacterium tuberculosis by high resolution mass spectrometry.</title>
        <authorList>
            <person name="Kelkar D.S."/>
            <person name="Kumar D."/>
            <person name="Kumar P."/>
            <person name="Balakrishnan L."/>
            <person name="Muthusamy B."/>
            <person name="Yadav A.K."/>
            <person name="Shrivastava P."/>
            <person name="Marimuthu A."/>
            <person name="Anand S."/>
            <person name="Sundaram H."/>
            <person name="Kingsbury R."/>
            <person name="Harsha H.C."/>
            <person name="Nair B."/>
            <person name="Prasad T.S."/>
            <person name="Chauhan D.S."/>
            <person name="Katoch K."/>
            <person name="Katoch V.M."/>
            <person name="Kumar P."/>
            <person name="Chaerkady R."/>
            <person name="Ramachandran S."/>
            <person name="Dash D."/>
            <person name="Pandey A."/>
        </authorList>
    </citation>
    <scope>IDENTIFICATION BY MASS SPECTROMETRY [LARGE SCALE ANALYSIS]</scope>
    <source>
        <strain>ATCC 25618 / H37Rv</strain>
    </source>
</reference>
<reference key="4">
    <citation type="journal article" date="2007" name="Curr. Pharm. Des.">
        <title>Purine metabolism in Mycobacterium tuberculosis as a target for drug development.</title>
        <authorList>
            <person name="Parker W.B."/>
            <person name="Long M.C."/>
        </authorList>
    </citation>
    <scope>REVIEW</scope>
</reference>
<reference key="5">
    <citation type="journal article" date="2009" name="Protein Expr. Purif.">
        <title>Hypoxanthine-guanine phosphoribosyltransferase from Mycobacterium tuberculosis H37Rv: cloning, expression, and biochemical characterization.</title>
        <authorList>
            <person name="Biazus G."/>
            <person name="Schneider C.Z."/>
            <person name="Palma M.S."/>
            <person name="Basso L.A."/>
            <person name="Santos D.S."/>
        </authorList>
    </citation>
    <scope>FUNCTION</scope>
    <scope>CATALYTIC ACTIVITY</scope>
    <scope>BIOPHYSICOCHEMICAL PROPERTIES</scope>
    <scope>SUBSTRATE SPECIFICITY</scope>
    <scope>PATHWAY</scope>
    <source>
        <strain>H37Rv</strain>
    </source>
</reference>
<reference key="6">
    <citation type="journal article" date="2011" name="Curr. Med. Chem.">
        <title>Purine Salvage Pathway in Mycobacterium tuberculosis.</title>
        <authorList>
            <person name="Ducati R.G."/>
            <person name="Breda A."/>
            <person name="Basso L.A."/>
            <person name="Santos D.S."/>
        </authorList>
    </citation>
    <scope>REVIEW</scope>
    <scope>PATHWAY</scope>
</reference>
<reference key="7">
    <citation type="journal article" date="2017" name="Biochimie">
        <title>Oligomeric state of hypoxanthine-guanine phosphoribosyltransferase from Mycobacterium tuberculosis.</title>
        <authorList>
            <person name="Eng W.S."/>
            <person name="Keough D.T."/>
            <person name="Hockova D."/>
            <person name="Winzor D.J."/>
            <person name="Guddat L.W."/>
        </authorList>
    </citation>
    <scope>CATALYTIC ACTIVITY</scope>
    <scope>SUBUNIT</scope>
</reference>
<reference evidence="14 15 16 17" key="8">
    <citation type="journal article" date="2015" name="J. Med. Chem.">
        <title>First Crystal Structures of Mycobacterium tuberculosis 6-Oxopurine Phosphoribosyltransferase: Complexes with GMP and Pyrophosphate and with Acyclic Nucleoside Phosphonates Whose Prodrugs Have Antituberculosis Activity.</title>
        <authorList>
            <person name="Eng W.S."/>
            <person name="Hockova D."/>
            <person name="Spacek P."/>
            <person name="Janeba Z."/>
            <person name="West N.P."/>
            <person name="Woods K."/>
            <person name="Naesens L.M."/>
            <person name="Keough D.T."/>
            <person name="Guddat L.W."/>
        </authorList>
    </citation>
    <scope>X-RAY CRYSTALLOGRAPHY (2.03 ANGSTROMS) IN COMPLEXES WITH MAGNESIUM; GMP; DIPHOSPHATE AND ACYCLIC NUCLEOSIDE PHOSPHONATE INHIBITORS</scope>
    <scope>FUNCTION</scope>
    <scope>CATALYTIC ACTIVITY</scope>
    <scope>COFACTOR</scope>
    <scope>BIOPHYSICOCHEMICAL PROPERTIES</scope>
    <scope>ACTIVITY REGULATION</scope>
</reference>
<reference evidence="18 19 20" key="9">
    <citation type="journal article" date="2018" name="Eur. J. Med. Chem.">
        <title>Pyrrolidine nucleoside bisphosphonates as antituberculosis agents targeting hypoxanthine-guanine phosphoribosyltransferase.</title>
        <authorList>
            <person name="Eng W.S."/>
            <person name="Rejman D."/>
            <person name="Pohl R."/>
            <person name="West N.P."/>
            <person name="Woods K."/>
            <person name="Naesens L.M.J."/>
            <person name="Keough D.T."/>
            <person name="Guddat L.W."/>
        </authorList>
    </citation>
    <scope>X-RAY CRYSTALLOGRAPHY (2.45 ANGSTROMS) IN COMPLEXES WITH PYRROLIDINE NUCLEOSIDE BISPHOSPHONATE INHIBITORS AND DIPHOSPHATE</scope>
    <scope>ACTIVITY REGULATION</scope>
</reference>
<accession>P9WHQ9</accession>
<accession>L0TER1</accession>
<accession>O06383</accession>
<accession>P0A5T0</accession>
<accession>P96906</accession>
<organism>
    <name type="scientific">Mycobacterium tuberculosis (strain ATCC 25618 / H37Rv)</name>
    <dbReference type="NCBI Taxonomy" id="83332"/>
    <lineage>
        <taxon>Bacteria</taxon>
        <taxon>Bacillati</taxon>
        <taxon>Actinomycetota</taxon>
        <taxon>Actinomycetes</taxon>
        <taxon>Mycobacteriales</taxon>
        <taxon>Mycobacteriaceae</taxon>
        <taxon>Mycobacterium</taxon>
        <taxon>Mycobacterium tuberculosis complex</taxon>
    </lineage>
</organism>
<feature type="chain" id="PRO_0000139609" description="Hypoxanthine-guanine phosphoribosyltransferase">
    <location>
        <begin position="1"/>
        <end position="202"/>
    </location>
</feature>
<feature type="active site" description="Proton acceptor" evidence="1">
    <location>
        <position position="126"/>
    </location>
</feature>
<feature type="binding site" evidence="3 14 18">
    <location>
        <position position="66"/>
    </location>
    <ligand>
        <name>diphosphate</name>
        <dbReference type="ChEBI" id="CHEBI:33019"/>
    </ligand>
</feature>
<feature type="binding site" evidence="3 14 18">
    <location>
        <position position="67"/>
    </location>
    <ligand>
        <name>diphosphate</name>
        <dbReference type="ChEBI" id="CHEBI:33019"/>
    </ligand>
</feature>
<feature type="binding site" evidence="3 14">
    <location>
        <position position="122"/>
    </location>
    <ligand>
        <name>Mg(2+)</name>
        <dbReference type="ChEBI" id="CHEBI:18420"/>
    </ligand>
</feature>
<feature type="binding site" evidence="3 14">
    <location>
        <position position="123"/>
    </location>
    <ligand>
        <name>Mg(2+)</name>
        <dbReference type="ChEBI" id="CHEBI:18420"/>
    </ligand>
</feature>
<feature type="binding site" evidence="3 14">
    <location>
        <position position="154"/>
    </location>
    <ligand>
        <name>GMP</name>
        <dbReference type="ChEBI" id="CHEBI:58115"/>
    </ligand>
</feature>
<feature type="binding site" evidence="3 14">
    <location>
        <begin position="175"/>
        <end position="176"/>
    </location>
    <ligand>
        <name>GMP</name>
        <dbReference type="ChEBI" id="CHEBI:58115"/>
    </ligand>
</feature>
<feature type="binding site" evidence="3 14">
    <location>
        <position position="182"/>
    </location>
    <ligand>
        <name>GMP</name>
        <dbReference type="ChEBI" id="CHEBI:58115"/>
    </ligand>
</feature>
<feature type="binding site" evidence="3 14 18">
    <location>
        <position position="188"/>
    </location>
    <ligand>
        <name>diphosphate</name>
        <dbReference type="ChEBI" id="CHEBI:33019"/>
    </ligand>
</feature>
<feature type="sequence conflict" description="In Ref. 1; AAB48624." evidence="10" ref="1">
    <original>ND</original>
    <variation>KT</variation>
    <location>
        <begin position="173"/>
        <end position="174"/>
    </location>
</feature>
<feature type="turn" evidence="21">
    <location>
        <begin position="20"/>
        <end position="22"/>
    </location>
</feature>
<feature type="strand" evidence="21">
    <location>
        <begin position="23"/>
        <end position="28"/>
    </location>
</feature>
<feature type="helix" evidence="21">
    <location>
        <begin position="30"/>
        <end position="47"/>
    </location>
</feature>
<feature type="turn" evidence="21">
    <location>
        <begin position="48"/>
        <end position="50"/>
    </location>
</feature>
<feature type="helix" evidence="21">
    <location>
        <begin position="51"/>
        <end position="55"/>
    </location>
</feature>
<feature type="strand" evidence="21">
    <location>
        <begin position="59"/>
        <end position="64"/>
    </location>
</feature>
<feature type="turn" evidence="21">
    <location>
        <begin position="65"/>
        <end position="68"/>
    </location>
</feature>
<feature type="helix" evidence="21">
    <location>
        <begin position="69"/>
        <end position="78"/>
    </location>
</feature>
<feature type="strand" evidence="22">
    <location>
        <begin position="79"/>
        <end position="81"/>
    </location>
</feature>
<feature type="strand" evidence="21">
    <location>
        <begin position="83"/>
        <end position="90"/>
    </location>
</feature>
<feature type="helix" evidence="23">
    <location>
        <begin position="97"/>
        <end position="100"/>
    </location>
</feature>
<feature type="strand" evidence="21">
    <location>
        <begin position="105"/>
        <end position="107"/>
    </location>
</feature>
<feature type="strand" evidence="21">
    <location>
        <begin position="117"/>
        <end position="128"/>
    </location>
</feature>
<feature type="helix" evidence="21">
    <location>
        <begin position="129"/>
        <end position="139"/>
    </location>
</feature>
<feature type="strand" evidence="21">
    <location>
        <begin position="144"/>
        <end position="153"/>
    </location>
</feature>
<feature type="helix" evidence="21">
    <location>
        <begin position="155"/>
        <end position="159"/>
    </location>
</feature>
<feature type="strand" evidence="21">
    <location>
        <begin position="165"/>
        <end position="170"/>
    </location>
</feature>
<feature type="strand" evidence="21">
    <location>
        <begin position="176"/>
        <end position="178"/>
    </location>
</feature>
<feature type="strand" evidence="21">
    <location>
        <begin position="191"/>
        <end position="196"/>
    </location>
</feature>
<feature type="turn" evidence="21">
    <location>
        <begin position="198"/>
        <end position="200"/>
    </location>
</feature>
<evidence type="ECO:0000250" key="1">
    <source>
        <dbReference type="UniProtKB" id="P0A9M2"/>
    </source>
</evidence>
<evidence type="ECO:0000269" key="2">
    <source>
    </source>
</evidence>
<evidence type="ECO:0000269" key="3">
    <source>
    </source>
</evidence>
<evidence type="ECO:0000269" key="4">
    <source>
    </source>
</evidence>
<evidence type="ECO:0000269" key="5">
    <source>
    </source>
</evidence>
<evidence type="ECO:0000303" key="6">
    <source>
    </source>
</evidence>
<evidence type="ECO:0000303" key="7">
    <source>
    </source>
</evidence>
<evidence type="ECO:0000303" key="8">
    <source>
    </source>
</evidence>
<evidence type="ECO:0000303" key="9">
    <source>
    </source>
</evidence>
<evidence type="ECO:0000305" key="10"/>
<evidence type="ECO:0000305" key="11">
    <source>
    </source>
</evidence>
<evidence type="ECO:0000305" key="12">
    <source>
    </source>
</evidence>
<evidence type="ECO:0000305" key="13">
    <source>
    </source>
</evidence>
<evidence type="ECO:0007744" key="14">
    <source>
        <dbReference type="PDB" id="4RHT"/>
    </source>
</evidence>
<evidence type="ECO:0007744" key="15">
    <source>
        <dbReference type="PDB" id="4RHU"/>
    </source>
</evidence>
<evidence type="ECO:0007744" key="16">
    <source>
        <dbReference type="PDB" id="4RHX"/>
    </source>
</evidence>
<evidence type="ECO:0007744" key="17">
    <source>
        <dbReference type="PDB" id="4RHY"/>
    </source>
</evidence>
<evidence type="ECO:0007744" key="18">
    <source>
        <dbReference type="PDB" id="5KNP"/>
    </source>
</evidence>
<evidence type="ECO:0007744" key="19">
    <source>
        <dbReference type="PDB" id="5KNQ"/>
    </source>
</evidence>
<evidence type="ECO:0007744" key="20">
    <source>
        <dbReference type="PDB" id="5KNY"/>
    </source>
</evidence>
<evidence type="ECO:0007829" key="21">
    <source>
        <dbReference type="PDB" id="4RHX"/>
    </source>
</evidence>
<evidence type="ECO:0007829" key="22">
    <source>
        <dbReference type="PDB" id="5KNP"/>
    </source>
</evidence>
<evidence type="ECO:0007829" key="23">
    <source>
        <dbReference type="PDB" id="5KNQ"/>
    </source>
</evidence>
<proteinExistence type="evidence at protein level"/>
<protein>
    <recommendedName>
        <fullName evidence="7 9">Hypoxanthine-guanine phosphoribosyltransferase</fullName>
        <shortName evidence="7">HGPRT</shortName>
        <shortName>HGPRTase</shortName>
        <ecNumber evidence="2 3 4">2.4.2.8</ecNumber>
    </recommendedName>
</protein>
<name>HGPRT_MYCTU</name>
<sequence length="202" mass="22251">MHVTQSSSAITPGQTAELYPGDIKSVLLTAEQIQARIAELGEQIGNDYRELSATTGQDLLLITVLKGAVLFVTDLARAIPVPTQFEFMAVSSYGSSTSSSGVVRILKDLDRDIHGRDVLIVEDVVDSGLTLSWLSRNLTSRNPRSLRVCTLLRKPDAVHANVEIAYVGFDIPNDFVVGYGLDYDERYRDLSYIGTLDPRVYQ</sequence>
<gene>
    <name evidence="7" type="primary">hpt</name>
    <name type="synonym">hprT</name>
    <name type="ordered locus">Rv3624c</name>
    <name type="ORF">MTCY15C10.28</name>
</gene>
<comment type="function">
    <text evidence="2 3">Purine salvage pathway enzyme that catalyzes the transfer of the ribosyl-5-phosphate group from 5-phospho-alpha-D-ribose 1-diphosphate (PRPP) to the N9 position of the 6-oxopurines hypoxanthine and guanine to form the corresponding ribonucleotides IMP (inosine 5'-monophosphate) and GMP (guanosine 5'-monophosphate), with the release of PPi (PubMed:19362594, PubMed:25915781). Thus, specifically recycles hypoxanthine and guanine imported from the external medium, and converts them to IMP and GMP, respectively. Cannot use xanthine as substrate (PubMed:19362594).</text>
</comment>
<comment type="catalytic activity">
    <reaction evidence="2 3">
        <text>IMP + diphosphate = hypoxanthine + 5-phospho-alpha-D-ribose 1-diphosphate</text>
        <dbReference type="Rhea" id="RHEA:17973"/>
        <dbReference type="ChEBI" id="CHEBI:17368"/>
        <dbReference type="ChEBI" id="CHEBI:33019"/>
        <dbReference type="ChEBI" id="CHEBI:58017"/>
        <dbReference type="ChEBI" id="CHEBI:58053"/>
        <dbReference type="EC" id="2.4.2.8"/>
    </reaction>
    <physiologicalReaction direction="right-to-left" evidence="11">
        <dbReference type="Rhea" id="RHEA:17975"/>
    </physiologicalReaction>
</comment>
<comment type="catalytic activity">
    <reaction evidence="2 3 4">
        <text>GMP + diphosphate = guanine + 5-phospho-alpha-D-ribose 1-diphosphate</text>
        <dbReference type="Rhea" id="RHEA:25424"/>
        <dbReference type="ChEBI" id="CHEBI:16235"/>
        <dbReference type="ChEBI" id="CHEBI:33019"/>
        <dbReference type="ChEBI" id="CHEBI:58017"/>
        <dbReference type="ChEBI" id="CHEBI:58115"/>
        <dbReference type="EC" id="2.4.2.8"/>
    </reaction>
    <physiologicalReaction direction="right-to-left" evidence="11">
        <dbReference type="Rhea" id="RHEA:25426"/>
    </physiologicalReaction>
</comment>
<comment type="cofactor">
    <cofactor evidence="12">
        <name>Mg(2+)</name>
        <dbReference type="ChEBI" id="CHEBI:18420"/>
    </cofactor>
</comment>
<comment type="activity regulation">
    <text evidence="3 5">Competitively inhibited by acyclic nucleoside phosphonates (ANPs) with Ki values as low as 0.69 uM. Prodrugs of these compounds arrest the growth of a virulent strain of M.tuberculosis with MIC50 values as low as 4.5 uM and possess low cytotoxicity in mammalian cells (PubMed:25915781). Inhibited by pyrrolidine nucleoside bisphosphonates, which are also able to arrest the growth of virulent M.tuberculosis not only in its replicating phase but also in its latent phase, and to arrest the growth of M.tuberculosis in infected macrophages while having low cytotoxicity in mammalian cells (PubMed:30265958).</text>
</comment>
<comment type="biophysicochemical properties">
    <kinetics>
        <KM evidence="2">25 uM for guanine (at pH 7.4 and 25 degrees Celsius)</KM>
        <KM evidence="2">50 uM for hypoxanthine (at pH 7.4 and 25 degrees Celsius)</KM>
        <KM evidence="3">4.4 uM for guanine (at pH 7.4 and 25 degrees Celsius)</KM>
        <KM evidence="3">8.3 uM for hypoxanthine (at pH 7.4 and 25 degrees Celsius)</KM>
        <KM evidence="2">360 uM for 5-phospho-alpha-D-ribose 1-diphosphate (with guanine as cosubstrate, at pH 7.4 and 25 degrees Celsius)</KM>
        <KM evidence="2">2039 uM for 5-phospho-alpha-D-ribose 1-diphosphate (with hypoxanthine as cosubstrate, at pH 7.4 and 25 degrees Celsius)</KM>
        <KM evidence="3">465 uM for 5-phospho-alpha-D-ribose 1-diphosphate (with guanine as cosubstrate, at pH 7.4 and 25 degrees Celsius)</KM>
        <KM evidence="3">1443 uM for 5-phospho-alpha-D-ribose 1-diphosphate (with hypoxanthine as cosubstrate, at pH 7.4 and 25 degrees Celsius)</KM>
        <Vmax evidence="2">0.37 umol/min/mg enzyme with guanine as substrate (at pH 7.4 and 25 degrees Celsius)</Vmax>
        <Vmax evidence="2">0.37 umol/min/mg enzyme with hypoxanthine as substrate (at pH 7.4 and 25 degrees Celsius)</Vmax>
        <text evidence="2 3">kcat is 0.14 sec(-1) with guanine as substrate. kcat is 0.9 sec(-1) with hypoxanthine as substrate (at pH 7.4 and 25 degrees Celsius) (PubMed:19362594). kcat is 0.62 sec(-1) with guanine as substrate. kcat is 0.55 sec(-1) with hypoxanthine as substrate (at pH 7.4 and 25 degrees Celsius) (PubMed:25915781).</text>
    </kinetics>
</comment>
<comment type="pathway">
    <text evidence="8 11">Purine metabolism; IMP biosynthesis via salvage pathway; IMP from hypoxanthine: step 1/1.</text>
</comment>
<comment type="pathway">
    <text evidence="8 11">Purine metabolism; GMP biosynthesis via salvage pathway; GMP from guanine: step 1/1.</text>
</comment>
<comment type="subunit">
    <text evidence="4">Homodimer and homotetramer in equilibrium. The presence or absence of divalent metal ions, as well as phosphate, can affect the oligomerization state of the enzyme. Likely functions as a tetramer (rather than a dimer) in its biological environment, which is the most active form. The dimeric structure is also active though ~50% of that of the tetramer.</text>
</comment>
<comment type="subcellular location">
    <subcellularLocation>
        <location evidence="10">Cytoplasm</location>
    </subcellularLocation>
</comment>
<comment type="miscellaneous">
    <text evidence="6 13">Is a target for anti-TB drug development.</text>
</comment>
<comment type="similarity">
    <text evidence="10">Belongs to the purine/pyrimidine phosphoribosyltransferase family.</text>
</comment>
<comment type="sequence caution" evidence="10">
    <conflict type="erroneous initiation">
        <sequence resource="EMBL-CDS" id="CCP46447"/>
    </conflict>
    <text>Extended N-terminus.</text>
</comment>
<keyword id="KW-0002">3D-structure</keyword>
<keyword id="KW-0963">Cytoplasm</keyword>
<keyword id="KW-0328">Glycosyltransferase</keyword>
<keyword id="KW-0460">Magnesium</keyword>
<keyword id="KW-0479">Metal-binding</keyword>
<keyword id="KW-0547">Nucleotide-binding</keyword>
<keyword id="KW-0660">Purine salvage</keyword>
<keyword id="KW-1185">Reference proteome</keyword>
<keyword id="KW-0808">Transferase</keyword>
<dbReference type="EC" id="2.4.2.8" evidence="2 3 4"/>
<dbReference type="EMBL" id="U88876">
    <property type="protein sequence ID" value="AAB48624.1"/>
    <property type="molecule type" value="Genomic_DNA"/>
</dbReference>
<dbReference type="EMBL" id="AL123456">
    <property type="protein sequence ID" value="CCP46447.1"/>
    <property type="status" value="ALT_INIT"/>
    <property type="molecule type" value="Genomic_DNA"/>
</dbReference>
<dbReference type="PIR" id="A70561">
    <property type="entry name" value="A70561"/>
</dbReference>
<dbReference type="RefSeq" id="NP_218141.1">
    <property type="nucleotide sequence ID" value="NC_000962.3"/>
</dbReference>
<dbReference type="PDB" id="4RHT">
    <property type="method" value="X-ray"/>
    <property type="resolution" value="2.76 A"/>
    <property type="chains" value="A/B/C/D=2-202"/>
</dbReference>
<dbReference type="PDB" id="4RHU">
    <property type="method" value="X-ray"/>
    <property type="resolution" value="2.57 A"/>
    <property type="chains" value="A/B/C/D/E/F=2-202"/>
</dbReference>
<dbReference type="PDB" id="4RHX">
    <property type="method" value="X-ray"/>
    <property type="resolution" value="2.03 A"/>
    <property type="chains" value="A/B/C/D=2-202"/>
</dbReference>
<dbReference type="PDB" id="4RHY">
    <property type="method" value="X-ray"/>
    <property type="resolution" value="2.32 A"/>
    <property type="chains" value="A/B/C/D=2-202"/>
</dbReference>
<dbReference type="PDB" id="5KNP">
    <property type="method" value="X-ray"/>
    <property type="resolution" value="2.45 A"/>
    <property type="chains" value="A/B/C/D=2-202"/>
</dbReference>
<dbReference type="PDB" id="5KNQ">
    <property type="method" value="X-ray"/>
    <property type="resolution" value="2.55 A"/>
    <property type="chains" value="A/B/C/D=2-202"/>
</dbReference>
<dbReference type="PDB" id="5KNY">
    <property type="method" value="X-ray"/>
    <property type="resolution" value="2.91 A"/>
    <property type="chains" value="A/B/C/D=2-202"/>
</dbReference>
<dbReference type="PDBsum" id="4RHT"/>
<dbReference type="PDBsum" id="4RHU"/>
<dbReference type="PDBsum" id="4RHX"/>
<dbReference type="PDBsum" id="4RHY"/>
<dbReference type="PDBsum" id="5KNP"/>
<dbReference type="PDBsum" id="5KNQ"/>
<dbReference type="PDBsum" id="5KNY"/>
<dbReference type="SMR" id="P9WHQ9"/>
<dbReference type="FunCoup" id="P9WHQ9">
    <property type="interactions" value="256"/>
</dbReference>
<dbReference type="STRING" id="83332.Rv3624c"/>
<dbReference type="BindingDB" id="P9WHQ9"/>
<dbReference type="ChEMBL" id="CHEMBL4295584"/>
<dbReference type="PaxDb" id="83332-Rv3624c"/>
<dbReference type="DNASU" id="885398"/>
<dbReference type="GeneID" id="885398"/>
<dbReference type="KEGG" id="mtu:Rv3624c"/>
<dbReference type="PATRIC" id="fig|83332.12.peg.4040"/>
<dbReference type="TubercuList" id="Rv3624c"/>
<dbReference type="eggNOG" id="COG0634">
    <property type="taxonomic scope" value="Bacteria"/>
</dbReference>
<dbReference type="InParanoid" id="P9WHQ9"/>
<dbReference type="OrthoDB" id="9802824at2"/>
<dbReference type="BRENDA" id="2.4.2.8">
    <property type="organism ID" value="3445"/>
</dbReference>
<dbReference type="UniPathway" id="UPA00591">
    <property type="reaction ID" value="UER00648"/>
</dbReference>
<dbReference type="UniPathway" id="UPA00909">
    <property type="reaction ID" value="UER00887"/>
</dbReference>
<dbReference type="EvolutionaryTrace" id="P9WHQ9"/>
<dbReference type="Proteomes" id="UP000001584">
    <property type="component" value="Chromosome"/>
</dbReference>
<dbReference type="GO" id="GO:0005829">
    <property type="term" value="C:cytosol"/>
    <property type="evidence" value="ECO:0000318"/>
    <property type="project" value="GO_Central"/>
</dbReference>
<dbReference type="GO" id="GO:0052657">
    <property type="term" value="F:guanine phosphoribosyltransferase activity"/>
    <property type="evidence" value="ECO:0000314"/>
    <property type="project" value="MTBBASE"/>
</dbReference>
<dbReference type="GO" id="GO:0004422">
    <property type="term" value="F:hypoxanthine phosphoribosyltransferase activity"/>
    <property type="evidence" value="ECO:0000314"/>
    <property type="project" value="MTBBASE"/>
</dbReference>
<dbReference type="GO" id="GO:0000287">
    <property type="term" value="F:magnesium ion binding"/>
    <property type="evidence" value="ECO:0000318"/>
    <property type="project" value="GO_Central"/>
</dbReference>
<dbReference type="GO" id="GO:0000166">
    <property type="term" value="F:nucleotide binding"/>
    <property type="evidence" value="ECO:0007669"/>
    <property type="project" value="UniProtKB-KW"/>
</dbReference>
<dbReference type="GO" id="GO:0006177">
    <property type="term" value="P:GMP biosynthetic process"/>
    <property type="evidence" value="ECO:0000314"/>
    <property type="project" value="MTBBASE"/>
</dbReference>
<dbReference type="GO" id="GO:0032263">
    <property type="term" value="P:GMP salvage"/>
    <property type="evidence" value="ECO:0000318"/>
    <property type="project" value="GO_Central"/>
</dbReference>
<dbReference type="GO" id="GO:0006178">
    <property type="term" value="P:guanine salvage"/>
    <property type="evidence" value="ECO:0000318"/>
    <property type="project" value="GO_Central"/>
</dbReference>
<dbReference type="GO" id="GO:0046100">
    <property type="term" value="P:hypoxanthine metabolic process"/>
    <property type="evidence" value="ECO:0000318"/>
    <property type="project" value="GO_Central"/>
</dbReference>
<dbReference type="GO" id="GO:0006188">
    <property type="term" value="P:IMP biosynthetic process"/>
    <property type="evidence" value="ECO:0000314"/>
    <property type="project" value="MTBBASE"/>
</dbReference>
<dbReference type="GO" id="GO:0032264">
    <property type="term" value="P:IMP salvage"/>
    <property type="evidence" value="ECO:0000318"/>
    <property type="project" value="GO_Central"/>
</dbReference>
<dbReference type="GO" id="GO:0006166">
    <property type="term" value="P:purine ribonucleoside salvage"/>
    <property type="evidence" value="ECO:0007669"/>
    <property type="project" value="UniProtKB-KW"/>
</dbReference>
<dbReference type="GO" id="GO:0043101">
    <property type="term" value="P:purine-containing compound salvage"/>
    <property type="evidence" value="ECO:0000314"/>
    <property type="project" value="MTBBASE"/>
</dbReference>
<dbReference type="CDD" id="cd06223">
    <property type="entry name" value="PRTases_typeI"/>
    <property type="match status" value="1"/>
</dbReference>
<dbReference type="FunFam" id="3.40.50.2020:FF:000006">
    <property type="entry name" value="Hypoxanthine phosphoribosyltransferase"/>
    <property type="match status" value="1"/>
</dbReference>
<dbReference type="Gene3D" id="3.40.50.2020">
    <property type="match status" value="1"/>
</dbReference>
<dbReference type="InterPro" id="IPR050408">
    <property type="entry name" value="HGPRT"/>
</dbReference>
<dbReference type="InterPro" id="IPR005904">
    <property type="entry name" value="Hxn_phspho_trans"/>
</dbReference>
<dbReference type="InterPro" id="IPR000836">
    <property type="entry name" value="PRibTrfase_dom"/>
</dbReference>
<dbReference type="InterPro" id="IPR029057">
    <property type="entry name" value="PRTase-like"/>
</dbReference>
<dbReference type="NCBIfam" id="TIGR01203">
    <property type="entry name" value="HGPRTase"/>
    <property type="match status" value="1"/>
</dbReference>
<dbReference type="PANTHER" id="PTHR43340:SF1">
    <property type="entry name" value="HYPOXANTHINE PHOSPHORIBOSYLTRANSFERASE"/>
    <property type="match status" value="1"/>
</dbReference>
<dbReference type="PANTHER" id="PTHR43340">
    <property type="entry name" value="HYPOXANTHINE-GUANINE PHOSPHORIBOSYLTRANSFERASE"/>
    <property type="match status" value="1"/>
</dbReference>
<dbReference type="Pfam" id="PF00156">
    <property type="entry name" value="Pribosyltran"/>
    <property type="match status" value="1"/>
</dbReference>
<dbReference type="SUPFAM" id="SSF53271">
    <property type="entry name" value="PRTase-like"/>
    <property type="match status" value="1"/>
</dbReference>
<dbReference type="PROSITE" id="PS00103">
    <property type="entry name" value="PUR_PYR_PR_TRANSFER"/>
    <property type="match status" value="1"/>
</dbReference>